<dbReference type="EMBL" id="L42023">
    <property type="protein sequence ID" value="AAC23258.1"/>
    <property type="molecule type" value="Genomic_DNA"/>
</dbReference>
<dbReference type="PIR" id="G64037">
    <property type="entry name" value="G64037"/>
</dbReference>
<dbReference type="RefSeq" id="NP_439741.2">
    <property type="nucleotide sequence ID" value="NC_000907.1"/>
</dbReference>
<dbReference type="SMR" id="P44267"/>
<dbReference type="STRING" id="71421.HI_1599"/>
<dbReference type="EnsemblBacteria" id="AAC23258">
    <property type="protein sequence ID" value="AAC23258"/>
    <property type="gene ID" value="HI_1599"/>
</dbReference>
<dbReference type="KEGG" id="hin:HI_1599"/>
<dbReference type="PATRIC" id="fig|71421.8.peg.1672"/>
<dbReference type="eggNOG" id="COG3219">
    <property type="taxonomic scope" value="Bacteria"/>
</dbReference>
<dbReference type="HOGENOM" id="CLU_096334_1_0_6"/>
<dbReference type="OrthoDB" id="4146344at2"/>
<dbReference type="PhylomeDB" id="P44267"/>
<dbReference type="Proteomes" id="UP000000579">
    <property type="component" value="Chromosome"/>
</dbReference>
<dbReference type="Gene3D" id="3.90.930.50">
    <property type="match status" value="1"/>
</dbReference>
<dbReference type="Gene3D" id="1.10.150.690">
    <property type="entry name" value="DUF2063"/>
    <property type="match status" value="1"/>
</dbReference>
<dbReference type="InterPro" id="IPR018640">
    <property type="entry name" value="DUF2063"/>
</dbReference>
<dbReference type="InterPro" id="IPR044922">
    <property type="entry name" value="DUF2063_N_sf"/>
</dbReference>
<dbReference type="InterPro" id="IPR054098">
    <property type="entry name" value="NGO1945-like_C"/>
</dbReference>
<dbReference type="Pfam" id="PF09836">
    <property type="entry name" value="DUF2063"/>
    <property type="match status" value="1"/>
</dbReference>
<dbReference type="Pfam" id="PF22106">
    <property type="entry name" value="NGO1945_C"/>
    <property type="match status" value="1"/>
</dbReference>
<keyword id="KW-1185">Reference proteome</keyword>
<feature type="chain" id="PRO_0000078097" description="Uncharacterized protein HI_1599">
    <location>
        <begin position="1"/>
        <end position="238"/>
    </location>
</feature>
<reference key="1">
    <citation type="journal article" date="1995" name="Science">
        <title>Whole-genome random sequencing and assembly of Haemophilus influenzae Rd.</title>
        <authorList>
            <person name="Fleischmann R.D."/>
            <person name="Adams M.D."/>
            <person name="White O."/>
            <person name="Clayton R.A."/>
            <person name="Kirkness E.F."/>
            <person name="Kerlavage A.R."/>
            <person name="Bult C.J."/>
            <person name="Tomb J.-F."/>
            <person name="Dougherty B.A."/>
            <person name="Merrick J.M."/>
            <person name="McKenney K."/>
            <person name="Sutton G.G."/>
            <person name="FitzHugh W."/>
            <person name="Fields C.A."/>
            <person name="Gocayne J.D."/>
            <person name="Scott J.D."/>
            <person name="Shirley R."/>
            <person name="Liu L.-I."/>
            <person name="Glodek A."/>
            <person name="Kelley J.M."/>
            <person name="Weidman J.F."/>
            <person name="Phillips C.A."/>
            <person name="Spriggs T."/>
            <person name="Hedblom E."/>
            <person name="Cotton M.D."/>
            <person name="Utterback T.R."/>
            <person name="Hanna M.C."/>
            <person name="Nguyen D.T."/>
            <person name="Saudek D.M."/>
            <person name="Brandon R.C."/>
            <person name="Fine L.D."/>
            <person name="Fritchman J.L."/>
            <person name="Fuhrmann J.L."/>
            <person name="Geoghagen N.S.M."/>
            <person name="Gnehm C.L."/>
            <person name="McDonald L.A."/>
            <person name="Small K.V."/>
            <person name="Fraser C.M."/>
            <person name="Smith H.O."/>
            <person name="Venter J.C."/>
        </authorList>
    </citation>
    <scope>NUCLEOTIDE SEQUENCE [LARGE SCALE GENOMIC DNA]</scope>
    <source>
        <strain>ATCC 51907 / DSM 11121 / KW20 / Rd</strain>
    </source>
</reference>
<sequence length="238" mass="27533">MLPKSSLKETQQALANAIRLGNADPLNGYAASRLAVYTRLVRNNAFGFIDRCFVEAPLHIEPEYWKNAKENFVQNGNAHSPYFQDIAGEFLLFCQEKEIFDTNILALMDFENTQLLAEVSLAKVPEKFEWNRHSVMQLSGAAYLKSYDVDFLSSDFKQFDDTPIQAIIWRDSDFRIQQQILSELDYWLLSYLQEQPNSLENVLSALNTMVEDSTSIIPLLEQVWMKWVTSEVIYPEQR</sequence>
<organism>
    <name type="scientific">Haemophilus influenzae (strain ATCC 51907 / DSM 11121 / KW20 / Rd)</name>
    <dbReference type="NCBI Taxonomy" id="71421"/>
    <lineage>
        <taxon>Bacteria</taxon>
        <taxon>Pseudomonadati</taxon>
        <taxon>Pseudomonadota</taxon>
        <taxon>Gammaproteobacteria</taxon>
        <taxon>Pasteurellales</taxon>
        <taxon>Pasteurellaceae</taxon>
        <taxon>Haemophilus</taxon>
    </lineage>
</organism>
<name>Y1599_HAEIN</name>
<accession>P44267</accession>
<proteinExistence type="predicted"/>
<protein>
    <recommendedName>
        <fullName>Uncharacterized protein HI_1599</fullName>
    </recommendedName>
</protein>
<gene>
    <name type="ordered locus">HI_1599</name>
</gene>